<dbReference type="EC" id="3.6.4.-" evidence="1"/>
<dbReference type="EMBL" id="U27982">
    <property type="protein sequence ID" value="AAB39405.1"/>
    <property type="molecule type" value="Genomic_DNA"/>
</dbReference>
<dbReference type="EMBL" id="AL133314">
    <property type="protein sequence ID" value="CAB62322.1"/>
    <property type="molecule type" value="Genomic_DNA"/>
</dbReference>
<dbReference type="EMBL" id="CP002686">
    <property type="protein sequence ID" value="AEE78168.1"/>
    <property type="molecule type" value="Genomic_DNA"/>
</dbReference>
<dbReference type="EMBL" id="CP002686">
    <property type="protein sequence ID" value="ANM65018.1"/>
    <property type="molecule type" value="Genomic_DNA"/>
</dbReference>
<dbReference type="EMBL" id="BT003847">
    <property type="protein sequence ID" value="AAO41897.1"/>
    <property type="molecule type" value="mRNA"/>
</dbReference>
<dbReference type="EMBL" id="BT005073">
    <property type="protein sequence ID" value="AAO50606.1"/>
    <property type="molecule type" value="mRNA"/>
</dbReference>
<dbReference type="PIR" id="S68110">
    <property type="entry name" value="S68110"/>
</dbReference>
<dbReference type="RefSeq" id="NP_001327017.1">
    <property type="nucleotide sequence ID" value="NM_001339262.1"/>
</dbReference>
<dbReference type="RefSeq" id="NP_190236.1">
    <property type="nucleotide sequence ID" value="NM_114519.3"/>
</dbReference>
<dbReference type="SMR" id="P53497"/>
<dbReference type="BioGRID" id="9125">
    <property type="interactions" value="17"/>
</dbReference>
<dbReference type="FunCoup" id="P53497">
    <property type="interactions" value="1693"/>
</dbReference>
<dbReference type="IntAct" id="P53497">
    <property type="interactions" value="12"/>
</dbReference>
<dbReference type="STRING" id="3702.P53497"/>
<dbReference type="PaxDb" id="3702-AT3G46520.1"/>
<dbReference type="ProteomicsDB" id="244362"/>
<dbReference type="EnsemblPlants" id="AT3G46520.1">
    <property type="protein sequence ID" value="AT3G46520.1"/>
    <property type="gene ID" value="AT3G46520"/>
</dbReference>
<dbReference type="EnsemblPlants" id="AT3G46520.2">
    <property type="protein sequence ID" value="AT3G46520.2"/>
    <property type="gene ID" value="AT3G46520"/>
</dbReference>
<dbReference type="GeneID" id="823805"/>
<dbReference type="Gramene" id="AT3G46520.1">
    <property type="protein sequence ID" value="AT3G46520.1"/>
    <property type="gene ID" value="AT3G46520"/>
</dbReference>
<dbReference type="Gramene" id="AT3G46520.2">
    <property type="protein sequence ID" value="AT3G46520.2"/>
    <property type="gene ID" value="AT3G46520"/>
</dbReference>
<dbReference type="KEGG" id="ath:AT3G46520"/>
<dbReference type="Araport" id="AT3G46520"/>
<dbReference type="TAIR" id="AT3G46520">
    <property type="gene designation" value="ACT12"/>
</dbReference>
<dbReference type="eggNOG" id="KOG0676">
    <property type="taxonomic scope" value="Eukaryota"/>
</dbReference>
<dbReference type="HOGENOM" id="CLU_027965_0_2_1"/>
<dbReference type="InParanoid" id="P53497"/>
<dbReference type="OMA" id="FTTSAEF"/>
<dbReference type="PhylomeDB" id="P53497"/>
<dbReference type="PRO" id="PR:P53497"/>
<dbReference type="Proteomes" id="UP000006548">
    <property type="component" value="Chromosome 3"/>
</dbReference>
<dbReference type="ExpressionAtlas" id="P53497">
    <property type="expression patterns" value="baseline and differential"/>
</dbReference>
<dbReference type="GO" id="GO:0009941">
    <property type="term" value="C:chloroplast envelope"/>
    <property type="evidence" value="ECO:0007005"/>
    <property type="project" value="TAIR"/>
</dbReference>
<dbReference type="GO" id="GO:0009570">
    <property type="term" value="C:chloroplast stroma"/>
    <property type="evidence" value="ECO:0007005"/>
    <property type="project" value="TAIR"/>
</dbReference>
<dbReference type="GO" id="GO:0005856">
    <property type="term" value="C:cytoskeleton"/>
    <property type="evidence" value="ECO:0007669"/>
    <property type="project" value="UniProtKB-SubCell"/>
</dbReference>
<dbReference type="GO" id="GO:0005829">
    <property type="term" value="C:cytosol"/>
    <property type="evidence" value="ECO:0007005"/>
    <property type="project" value="TAIR"/>
</dbReference>
<dbReference type="GO" id="GO:0005739">
    <property type="term" value="C:mitochondrion"/>
    <property type="evidence" value="ECO:0007005"/>
    <property type="project" value="TAIR"/>
</dbReference>
<dbReference type="GO" id="GO:0005524">
    <property type="term" value="F:ATP binding"/>
    <property type="evidence" value="ECO:0007669"/>
    <property type="project" value="UniProtKB-KW"/>
</dbReference>
<dbReference type="GO" id="GO:0016787">
    <property type="term" value="F:hydrolase activity"/>
    <property type="evidence" value="ECO:0007669"/>
    <property type="project" value="UniProtKB-KW"/>
</dbReference>
<dbReference type="GO" id="GO:0005200">
    <property type="term" value="F:structural constituent of cytoskeleton"/>
    <property type="evidence" value="ECO:0000250"/>
    <property type="project" value="TAIR"/>
</dbReference>
<dbReference type="CDD" id="cd10224">
    <property type="entry name" value="ASKHA_NBD_actin"/>
    <property type="match status" value="1"/>
</dbReference>
<dbReference type="FunFam" id="3.30.420.40:FF:000050">
    <property type="entry name" value="Actin, alpha skeletal muscle"/>
    <property type="match status" value="1"/>
</dbReference>
<dbReference type="FunFam" id="3.30.420.40:FF:000205">
    <property type="entry name" value="Actin, alpha skeletal muscle"/>
    <property type="match status" value="1"/>
</dbReference>
<dbReference type="FunFam" id="3.30.420.40:FF:000291">
    <property type="entry name" value="Actin, alpha skeletal muscle"/>
    <property type="match status" value="1"/>
</dbReference>
<dbReference type="FunFam" id="3.90.640.10:FF:000001">
    <property type="entry name" value="Actin, muscle"/>
    <property type="match status" value="1"/>
</dbReference>
<dbReference type="Gene3D" id="3.30.420.40">
    <property type="match status" value="2"/>
</dbReference>
<dbReference type="Gene3D" id="3.90.640.10">
    <property type="entry name" value="Actin, Chain A, domain 4"/>
    <property type="match status" value="1"/>
</dbReference>
<dbReference type="InterPro" id="IPR004000">
    <property type="entry name" value="Actin"/>
</dbReference>
<dbReference type="InterPro" id="IPR020902">
    <property type="entry name" value="Actin/actin-like_CS"/>
</dbReference>
<dbReference type="InterPro" id="IPR004001">
    <property type="entry name" value="Actin_CS"/>
</dbReference>
<dbReference type="InterPro" id="IPR043129">
    <property type="entry name" value="ATPase_NBD"/>
</dbReference>
<dbReference type="PANTHER" id="PTHR11937">
    <property type="entry name" value="ACTIN"/>
    <property type="match status" value="1"/>
</dbReference>
<dbReference type="Pfam" id="PF00022">
    <property type="entry name" value="Actin"/>
    <property type="match status" value="1"/>
</dbReference>
<dbReference type="PRINTS" id="PR00190">
    <property type="entry name" value="ACTIN"/>
</dbReference>
<dbReference type="SMART" id="SM00268">
    <property type="entry name" value="ACTIN"/>
    <property type="match status" value="1"/>
</dbReference>
<dbReference type="SUPFAM" id="SSF53067">
    <property type="entry name" value="Actin-like ATPase domain"/>
    <property type="match status" value="2"/>
</dbReference>
<dbReference type="PROSITE" id="PS00406">
    <property type="entry name" value="ACTINS_1"/>
    <property type="match status" value="1"/>
</dbReference>
<dbReference type="PROSITE" id="PS00432">
    <property type="entry name" value="ACTINS_2"/>
    <property type="match status" value="1"/>
</dbReference>
<dbReference type="PROSITE" id="PS01132">
    <property type="entry name" value="ACTINS_ACT_LIKE"/>
    <property type="match status" value="1"/>
</dbReference>
<keyword id="KW-0007">Acetylation</keyword>
<keyword id="KW-0067">ATP-binding</keyword>
<keyword id="KW-0963">Cytoplasm</keyword>
<keyword id="KW-0206">Cytoskeleton</keyword>
<keyword id="KW-0378">Hydrolase</keyword>
<keyword id="KW-0547">Nucleotide-binding</keyword>
<keyword id="KW-1185">Reference proteome</keyword>
<gene>
    <name type="primary">ACT12</name>
    <name type="ordered locus">At3g46520</name>
    <name type="ORF">F12A12.40</name>
</gene>
<evidence type="ECO:0000250" key="1">
    <source>
        <dbReference type="UniProtKB" id="P68137"/>
    </source>
</evidence>
<evidence type="ECO:0000250" key="2">
    <source>
        <dbReference type="UniProtKB" id="Q96292"/>
    </source>
</evidence>
<evidence type="ECO:0000305" key="3"/>
<sequence>MADGEDIQPLVCDNGTGMVKAGFAGDDAPRAVFPSIVGRPRHTGVMVGMGQKDAYVGDEAQSKRGILTLKYPIEHGIVNNWDDMEKIWHHTFYNELRVAPEEHPVLLTEAPLNPKANREKMTQIMFETFNTPAMYVAIQAVLSLYASGRTTGIVLDSGDGVSHTVPIYEGYALPHAILRLDLAGRDLTDHLMKILTERGYSFTTTAEREIVRDMKEKLSYIALDYEQELETSKTSSSVEKSFELPDGQVITIGAERFRCPEVLFQPSMIGMENPGIHETTYNSIMKCDVDIRKDLYGNIVLSGGTTMFGGIGDRMSKEITALAPSSMKIKVVAPPERKYSVWIGGSILASLSTFQQMWIAKAEYDESGPSIVHRKCF</sequence>
<protein>
    <recommendedName>
        <fullName>Actin-12</fullName>
        <ecNumber evidence="1">3.6.4.-</ecNumber>
    </recommendedName>
</protein>
<accession>P53497</accession>
<organism>
    <name type="scientific">Arabidopsis thaliana</name>
    <name type="common">Mouse-ear cress</name>
    <dbReference type="NCBI Taxonomy" id="3702"/>
    <lineage>
        <taxon>Eukaryota</taxon>
        <taxon>Viridiplantae</taxon>
        <taxon>Streptophyta</taxon>
        <taxon>Embryophyta</taxon>
        <taxon>Tracheophyta</taxon>
        <taxon>Spermatophyta</taxon>
        <taxon>Magnoliopsida</taxon>
        <taxon>eudicotyledons</taxon>
        <taxon>Gunneridae</taxon>
        <taxon>Pentapetalae</taxon>
        <taxon>rosids</taxon>
        <taxon>malvids</taxon>
        <taxon>Brassicales</taxon>
        <taxon>Brassicaceae</taxon>
        <taxon>Camelineae</taxon>
        <taxon>Arabidopsis</taxon>
    </lineage>
</organism>
<reference key="1">
    <citation type="journal article" date="1996" name="Plant J.">
        <title>The Arabidopsis thaliana ACT4/ACT12 actin gene subclass is strongly expressed throughout pollen development.</title>
        <authorList>
            <person name="Huang S."/>
            <person name="An Y.-Q."/>
            <person name="McDowell J.M."/>
            <person name="McKinney E.C."/>
            <person name="Meagher R.B."/>
        </authorList>
    </citation>
    <scope>NUCLEOTIDE SEQUENCE [GENOMIC DNA]</scope>
    <source>
        <strain>cv. Columbia</strain>
    </source>
</reference>
<reference key="2">
    <citation type="journal article" date="2000" name="Nature">
        <title>Sequence and analysis of chromosome 3 of the plant Arabidopsis thaliana.</title>
        <authorList>
            <person name="Salanoubat M."/>
            <person name="Lemcke K."/>
            <person name="Rieger M."/>
            <person name="Ansorge W."/>
            <person name="Unseld M."/>
            <person name="Fartmann B."/>
            <person name="Valle G."/>
            <person name="Bloecker H."/>
            <person name="Perez-Alonso M."/>
            <person name="Obermaier B."/>
            <person name="Delseny M."/>
            <person name="Boutry M."/>
            <person name="Grivell L.A."/>
            <person name="Mache R."/>
            <person name="Puigdomenech P."/>
            <person name="De Simone V."/>
            <person name="Choisne N."/>
            <person name="Artiguenave F."/>
            <person name="Robert C."/>
            <person name="Brottier P."/>
            <person name="Wincker P."/>
            <person name="Cattolico L."/>
            <person name="Weissenbach J."/>
            <person name="Saurin W."/>
            <person name="Quetier F."/>
            <person name="Schaefer M."/>
            <person name="Mueller-Auer S."/>
            <person name="Gabel C."/>
            <person name="Fuchs M."/>
            <person name="Benes V."/>
            <person name="Wurmbach E."/>
            <person name="Drzonek H."/>
            <person name="Erfle H."/>
            <person name="Jordan N."/>
            <person name="Bangert S."/>
            <person name="Wiedelmann R."/>
            <person name="Kranz H."/>
            <person name="Voss H."/>
            <person name="Holland R."/>
            <person name="Brandt P."/>
            <person name="Nyakatura G."/>
            <person name="Vezzi A."/>
            <person name="D'Angelo M."/>
            <person name="Pallavicini A."/>
            <person name="Toppo S."/>
            <person name="Simionati B."/>
            <person name="Conrad A."/>
            <person name="Hornischer K."/>
            <person name="Kauer G."/>
            <person name="Loehnert T.-H."/>
            <person name="Nordsiek G."/>
            <person name="Reichelt J."/>
            <person name="Scharfe M."/>
            <person name="Schoen O."/>
            <person name="Bargues M."/>
            <person name="Terol J."/>
            <person name="Climent J."/>
            <person name="Navarro P."/>
            <person name="Collado C."/>
            <person name="Perez-Perez A."/>
            <person name="Ottenwaelder B."/>
            <person name="Duchemin D."/>
            <person name="Cooke R."/>
            <person name="Laudie M."/>
            <person name="Berger-Llauro C."/>
            <person name="Purnelle B."/>
            <person name="Masuy D."/>
            <person name="de Haan M."/>
            <person name="Maarse A.C."/>
            <person name="Alcaraz J.-P."/>
            <person name="Cottet A."/>
            <person name="Casacuberta E."/>
            <person name="Monfort A."/>
            <person name="Argiriou A."/>
            <person name="Flores M."/>
            <person name="Liguori R."/>
            <person name="Vitale D."/>
            <person name="Mannhaupt G."/>
            <person name="Haase D."/>
            <person name="Schoof H."/>
            <person name="Rudd S."/>
            <person name="Zaccaria P."/>
            <person name="Mewes H.-W."/>
            <person name="Mayer K.F.X."/>
            <person name="Kaul S."/>
            <person name="Town C.D."/>
            <person name="Koo H.L."/>
            <person name="Tallon L.J."/>
            <person name="Jenkins J."/>
            <person name="Rooney T."/>
            <person name="Rizzo M."/>
            <person name="Walts A."/>
            <person name="Utterback T."/>
            <person name="Fujii C.Y."/>
            <person name="Shea T.P."/>
            <person name="Creasy T.H."/>
            <person name="Haas B."/>
            <person name="Maiti R."/>
            <person name="Wu D."/>
            <person name="Peterson J."/>
            <person name="Van Aken S."/>
            <person name="Pai G."/>
            <person name="Militscher J."/>
            <person name="Sellers P."/>
            <person name="Gill J.E."/>
            <person name="Feldblyum T.V."/>
            <person name="Preuss D."/>
            <person name="Lin X."/>
            <person name="Nierman W.C."/>
            <person name="Salzberg S.L."/>
            <person name="White O."/>
            <person name="Venter J.C."/>
            <person name="Fraser C.M."/>
            <person name="Kaneko T."/>
            <person name="Nakamura Y."/>
            <person name="Sato S."/>
            <person name="Kato T."/>
            <person name="Asamizu E."/>
            <person name="Sasamoto S."/>
            <person name="Kimura T."/>
            <person name="Idesawa K."/>
            <person name="Kawashima K."/>
            <person name="Kishida Y."/>
            <person name="Kiyokawa C."/>
            <person name="Kohara M."/>
            <person name="Matsumoto M."/>
            <person name="Matsuno A."/>
            <person name="Muraki A."/>
            <person name="Nakayama S."/>
            <person name="Nakazaki N."/>
            <person name="Shinpo S."/>
            <person name="Takeuchi C."/>
            <person name="Wada T."/>
            <person name="Watanabe A."/>
            <person name="Yamada M."/>
            <person name="Yasuda M."/>
            <person name="Tabata S."/>
        </authorList>
    </citation>
    <scope>NUCLEOTIDE SEQUENCE [LARGE SCALE GENOMIC DNA]</scope>
    <source>
        <strain>cv. Columbia</strain>
    </source>
</reference>
<reference key="3">
    <citation type="journal article" date="2017" name="Plant J.">
        <title>Araport11: a complete reannotation of the Arabidopsis thaliana reference genome.</title>
        <authorList>
            <person name="Cheng C.Y."/>
            <person name="Krishnakumar V."/>
            <person name="Chan A.P."/>
            <person name="Thibaud-Nissen F."/>
            <person name="Schobel S."/>
            <person name="Town C.D."/>
        </authorList>
    </citation>
    <scope>GENOME REANNOTATION</scope>
    <source>
        <strain>cv. Columbia</strain>
    </source>
</reference>
<reference key="4">
    <citation type="journal article" date="2003" name="Science">
        <title>Empirical analysis of transcriptional activity in the Arabidopsis genome.</title>
        <authorList>
            <person name="Yamada K."/>
            <person name="Lim J."/>
            <person name="Dale J.M."/>
            <person name="Chen H."/>
            <person name="Shinn P."/>
            <person name="Palm C.J."/>
            <person name="Southwick A.M."/>
            <person name="Wu H.C."/>
            <person name="Kim C.J."/>
            <person name="Nguyen M."/>
            <person name="Pham P.K."/>
            <person name="Cheuk R.F."/>
            <person name="Karlin-Newmann G."/>
            <person name="Liu S.X."/>
            <person name="Lam B."/>
            <person name="Sakano H."/>
            <person name="Wu T."/>
            <person name="Yu G."/>
            <person name="Miranda M."/>
            <person name="Quach H.L."/>
            <person name="Tripp M."/>
            <person name="Chang C.H."/>
            <person name="Lee J.M."/>
            <person name="Toriumi M.J."/>
            <person name="Chan M.M."/>
            <person name="Tang C.C."/>
            <person name="Onodera C.S."/>
            <person name="Deng J.M."/>
            <person name="Akiyama K."/>
            <person name="Ansari Y."/>
            <person name="Arakawa T."/>
            <person name="Banh J."/>
            <person name="Banno F."/>
            <person name="Bowser L."/>
            <person name="Brooks S.Y."/>
            <person name="Carninci P."/>
            <person name="Chao Q."/>
            <person name="Choy N."/>
            <person name="Enju A."/>
            <person name="Goldsmith A.D."/>
            <person name="Gurjal M."/>
            <person name="Hansen N.F."/>
            <person name="Hayashizaki Y."/>
            <person name="Johnson-Hopson C."/>
            <person name="Hsuan V.W."/>
            <person name="Iida K."/>
            <person name="Karnes M."/>
            <person name="Khan S."/>
            <person name="Koesema E."/>
            <person name="Ishida J."/>
            <person name="Jiang P.X."/>
            <person name="Jones T."/>
            <person name="Kawai J."/>
            <person name="Kamiya A."/>
            <person name="Meyers C."/>
            <person name="Nakajima M."/>
            <person name="Narusaka M."/>
            <person name="Seki M."/>
            <person name="Sakurai T."/>
            <person name="Satou M."/>
            <person name="Tamse R."/>
            <person name="Vaysberg M."/>
            <person name="Wallender E.K."/>
            <person name="Wong C."/>
            <person name="Yamamura Y."/>
            <person name="Yuan S."/>
            <person name="Shinozaki K."/>
            <person name="Davis R.W."/>
            <person name="Theologis A."/>
            <person name="Ecker J.R."/>
        </authorList>
    </citation>
    <scope>NUCLEOTIDE SEQUENCE [LARGE SCALE MRNA]</scope>
    <source>
        <strain>cv. Columbia</strain>
    </source>
</reference>
<reference key="5">
    <citation type="journal article" date="1996" name="Genetics">
        <title>Structure and evolution of the actin gene family in Arabidopsis thaliana.</title>
        <authorList>
            <person name="McDowell J.M."/>
            <person name="Huang S."/>
            <person name="McKinney E.C."/>
            <person name="An Y.-Q."/>
            <person name="Meagher R.B."/>
        </authorList>
    </citation>
    <scope>GENE FAMILY ORGANIZATION</scope>
    <scope>CHARACTERIZATION</scope>
    <source>
        <strain>cv. Columbia</strain>
    </source>
</reference>
<proteinExistence type="evidence at protein level"/>
<name>ACT12_ARATH</name>
<comment type="function">
    <text>Actins are highly conserved proteins that are involved in various types of cell motility and are ubiquitously expressed in all eukaryotic cells. Essential component of cell cytoskeleton; plays an important role in cytoplasmic streaming, cell shape determination, cell division, organelle movement and extension growth. This is considered as one of the reproductive actins.</text>
</comment>
<comment type="catalytic activity">
    <reaction evidence="1">
        <text>ATP + H2O = ADP + phosphate + H(+)</text>
        <dbReference type="Rhea" id="RHEA:13065"/>
        <dbReference type="ChEBI" id="CHEBI:15377"/>
        <dbReference type="ChEBI" id="CHEBI:15378"/>
        <dbReference type="ChEBI" id="CHEBI:30616"/>
        <dbReference type="ChEBI" id="CHEBI:43474"/>
        <dbReference type="ChEBI" id="CHEBI:456216"/>
    </reaction>
</comment>
<comment type="subunit">
    <text>Polymerization of globular actin (G-actin) leads to a structural filament (F-actin) in the form of a two-stranded helix. The binding of profilin to monomeric G-actin cause the sequestration of actin into profilactin complexes, and prevents the polymerization.</text>
</comment>
<comment type="subcellular location">
    <subcellularLocation>
        <location>Cytoplasm</location>
        <location>Cytoskeleton</location>
    </subcellularLocation>
</comment>
<comment type="tissue specificity">
    <text>Displays particular expression in the root cap and pericycle tissues associated with lateral root development. Little or no reproductive-gene expression is detected in vegetative organs, such as stems, leaves, sepals and petals.</text>
</comment>
<comment type="developmental stage">
    <text>Expressed primarily in pollen.</text>
</comment>
<comment type="miscellaneous">
    <text>There are 8 actin genes in A.thaliana.</text>
</comment>
<comment type="similarity">
    <text evidence="3">Belongs to the actin family.</text>
</comment>
<feature type="initiator methionine" description="Removed" evidence="2">
    <location>
        <position position="1"/>
    </location>
</feature>
<feature type="chain" id="PRO_0000088896" description="Actin-12">
    <location>
        <begin position="2"/>
        <end position="377"/>
    </location>
</feature>
<feature type="modified residue" description="N-acetylalanine" evidence="2">
    <location>
        <position position="2"/>
    </location>
</feature>